<comment type="function">
    <text evidence="1">DNA-dependent RNA polymerase catalyzes the transcription of DNA into RNA using the four ribonucleoside triphosphates as substrates.</text>
</comment>
<comment type="catalytic activity">
    <reaction>
        <text>RNA(n) + a ribonucleoside 5'-triphosphate = RNA(n+1) + diphosphate</text>
        <dbReference type="Rhea" id="RHEA:21248"/>
        <dbReference type="Rhea" id="RHEA-COMP:14527"/>
        <dbReference type="Rhea" id="RHEA-COMP:17342"/>
        <dbReference type="ChEBI" id="CHEBI:33019"/>
        <dbReference type="ChEBI" id="CHEBI:61557"/>
        <dbReference type="ChEBI" id="CHEBI:140395"/>
        <dbReference type="EC" id="2.7.7.6"/>
    </reaction>
</comment>
<comment type="subunit">
    <text evidence="1">In plastids the minimal PEP RNA polymerase catalytic core is composed of four subunits: alpha, beta, beta', and beta''. When a (nuclear-encoded) sigma factor is associated with the core the holoenzyme is formed, which can initiate transcription (By similarity).</text>
</comment>
<comment type="subcellular location">
    <subcellularLocation>
        <location>Plastid</location>
        <location>Chloroplast</location>
    </subcellularLocation>
</comment>
<comment type="similarity">
    <text evidence="2">Belongs to the RNA polymerase alpha chain family.</text>
</comment>
<comment type="caution">
    <text evidence="2">Could be the product of a pseudogene. There are 3 rpoA-like genes in this organism (found in the inverted repeat). None of them are convincing as rpoA, and it may be that the functional gene is in the nucleus.</text>
</comment>
<gene>
    <name type="primary">rpoAL3-A</name>
    <name type="synonym">ORF365</name>
</gene>
<gene>
    <name type="primary">rpoAL3-B</name>
    <name type="synonym">ORF365</name>
</gene>
<geneLocation type="chloroplast"/>
<dbReference type="EC" id="2.7.7.6"/>
<dbReference type="EMBL" id="DQ897681">
    <property type="protein sequence ID" value="ABI17303.1"/>
    <property type="molecule type" value="Genomic_DNA"/>
</dbReference>
<dbReference type="EMBL" id="DQ897681">
    <property type="protein sequence ID" value="ABI17337.1"/>
    <property type="molecule type" value="Genomic_DNA"/>
</dbReference>
<dbReference type="RefSeq" id="YP_784111.1">
    <property type="nucleotide sequence ID" value="NC_008454.1"/>
</dbReference>
<dbReference type="RefSeq" id="YP_784145.1">
    <property type="nucleotide sequence ID" value="NC_008454.1"/>
</dbReference>
<dbReference type="SMR" id="Q06FN6"/>
<dbReference type="GeneID" id="4362876"/>
<dbReference type="GeneID" id="4362970"/>
<dbReference type="GO" id="GO:0009507">
    <property type="term" value="C:chloroplast"/>
    <property type="evidence" value="ECO:0007669"/>
    <property type="project" value="UniProtKB-SubCell"/>
</dbReference>
<dbReference type="GO" id="GO:0000428">
    <property type="term" value="C:DNA-directed RNA polymerase complex"/>
    <property type="evidence" value="ECO:0007669"/>
    <property type="project" value="UniProtKB-KW"/>
</dbReference>
<dbReference type="GO" id="GO:0005739">
    <property type="term" value="C:mitochondrion"/>
    <property type="evidence" value="ECO:0007669"/>
    <property type="project" value="GOC"/>
</dbReference>
<dbReference type="GO" id="GO:0003899">
    <property type="term" value="F:DNA-directed RNA polymerase activity"/>
    <property type="evidence" value="ECO:0007669"/>
    <property type="project" value="UniProtKB-EC"/>
</dbReference>
<dbReference type="GO" id="GO:0046983">
    <property type="term" value="F:protein dimerization activity"/>
    <property type="evidence" value="ECO:0007669"/>
    <property type="project" value="InterPro"/>
</dbReference>
<dbReference type="GO" id="GO:0006351">
    <property type="term" value="P:DNA-templated transcription"/>
    <property type="evidence" value="ECO:0007669"/>
    <property type="project" value="InterPro"/>
</dbReference>
<dbReference type="Gene3D" id="2.170.120.12">
    <property type="entry name" value="DNA-directed RNA polymerase, insert domain"/>
    <property type="match status" value="1"/>
</dbReference>
<dbReference type="Gene3D" id="3.30.1360.10">
    <property type="entry name" value="RNA polymerase, RBP11-like subunit"/>
    <property type="match status" value="2"/>
</dbReference>
<dbReference type="InterPro" id="IPR036603">
    <property type="entry name" value="RBP11-like"/>
</dbReference>
<dbReference type="InterPro" id="IPR036643">
    <property type="entry name" value="RNApol_insert_sf"/>
</dbReference>
<dbReference type="SUPFAM" id="SSF56553">
    <property type="entry name" value="Insert subdomain of RNA polymerase alpha subunit"/>
    <property type="match status" value="1"/>
</dbReference>
<dbReference type="SUPFAM" id="SSF55257">
    <property type="entry name" value="RBP11-like subunits of RNA polymerase"/>
    <property type="match status" value="2"/>
</dbReference>
<sequence length="365" mass="41391">MDFSEFSLEITNNKNFADWDYVECKYFHKDFAYGRFALSPLTAKESRLLKKGLFEALLTEILCLRFTHAKIQNECVNLMNIVGIQESLDEILKNFGKIILTGKLEEFVGKGPFVAILDVRGPLNAMAVDIELPPGIKVEIETQHIATITEPIPFVVELRIELVSSTSKGETGITDEEGFSIDPNPPIRKVNSSIQGYEYGGQTFERLSIEMLTSLPIIPNEALLLGSMKIMNLFQIVLQAKYLDYKELEKGIHVGVFCVSALRAEQSKWIKTILEDALYMVGGRKHQGPLTDEEDDSIDSNFTPVQNLDCRIESYEEEGQTFQRLFLEIWTKSPTEPQEALWEASAKILELFSLFLQTSKENEKD</sequence>
<protein>
    <recommendedName>
        <fullName>Putative DNA-directed RNA polymerase subunit alpha-like 3</fullName>
        <shortName>Putative PEP 3</shortName>
        <ecNumber>2.7.7.6</ecNumber>
    </recommendedName>
    <alternativeName>
        <fullName>Putative plastid-encoded RNA polymerase subunit alpha 3</fullName>
        <shortName>Putative RNA polymerase subunit alpha 3</shortName>
    </alternativeName>
</protein>
<proteinExistence type="uncertain"/>
<keyword id="KW-0150">Chloroplast</keyword>
<keyword id="KW-0240">DNA-directed RNA polymerase</keyword>
<keyword id="KW-0548">Nucleotidyltransferase</keyword>
<keyword id="KW-0934">Plastid</keyword>
<keyword id="KW-0804">Transcription</keyword>
<keyword id="KW-0808">Transferase</keyword>
<organism>
    <name type="scientific">Pelargonium hortorum</name>
    <name type="common">Common geranium</name>
    <name type="synonym">Pelargonium inquinans x Pelargonium zonale</name>
    <dbReference type="NCBI Taxonomy" id="4031"/>
    <lineage>
        <taxon>Eukaryota</taxon>
        <taxon>Viridiplantae</taxon>
        <taxon>Streptophyta</taxon>
        <taxon>Embryophyta</taxon>
        <taxon>Tracheophyta</taxon>
        <taxon>Spermatophyta</taxon>
        <taxon>Magnoliopsida</taxon>
        <taxon>eudicotyledons</taxon>
        <taxon>Gunneridae</taxon>
        <taxon>Pentapetalae</taxon>
        <taxon>rosids</taxon>
        <taxon>malvids</taxon>
        <taxon>Geraniales</taxon>
        <taxon>Geraniaceae</taxon>
        <taxon>Pelargonium</taxon>
    </lineage>
</organism>
<feature type="chain" id="PRO_0000296903" description="Putative DNA-directed RNA polymerase subunit alpha-like 3">
    <location>
        <begin position="1"/>
        <end position="365"/>
    </location>
</feature>
<evidence type="ECO:0000250" key="1"/>
<evidence type="ECO:0000305" key="2"/>
<reference key="1">
    <citation type="journal article" date="2006" name="Mol. Biol. Evol.">
        <title>The complete chloroplast genome sequence of Pelargonium x hortorum: organization and evolution of the largest and most highly rearranged chloroplast genome of land plants.</title>
        <authorList>
            <person name="Chumley T.W."/>
            <person name="Palmer J.D."/>
            <person name="Mower J.P."/>
            <person name="Fourcade H.M."/>
            <person name="Calie P.J."/>
            <person name="Boore J.L."/>
            <person name="Jansen R.K."/>
        </authorList>
    </citation>
    <scope>NUCLEOTIDE SEQUENCE [LARGE SCALE GENOMIC DNA]</scope>
    <source>
        <strain>cv. Ringo White</strain>
    </source>
</reference>
<name>RPAL3_PELHO</name>
<accession>Q06FN6</accession>